<evidence type="ECO:0000255" key="1">
    <source>
        <dbReference type="HAMAP-Rule" id="MF_00233"/>
    </source>
</evidence>
<proteinExistence type="inferred from homology"/>
<keyword id="KW-0998">Cell outer membrane</keyword>
<keyword id="KW-0143">Chaperone</keyword>
<keyword id="KW-0449">Lipoprotein</keyword>
<keyword id="KW-0472">Membrane</keyword>
<keyword id="KW-0564">Palmitate</keyword>
<keyword id="KW-0653">Protein transport</keyword>
<keyword id="KW-1185">Reference proteome</keyword>
<keyword id="KW-0732">Signal</keyword>
<keyword id="KW-0813">Transport</keyword>
<accession>Q32GZ8</accession>
<feature type="signal peptide" evidence="1">
    <location>
        <begin position="1"/>
        <end position="21"/>
    </location>
</feature>
<feature type="chain" id="PRO_1000021686" description="Outer-membrane lipoprotein LolB">
    <location>
        <begin position="22"/>
        <end position="207"/>
    </location>
</feature>
<feature type="lipid moiety-binding region" description="N-palmitoyl cysteine" evidence="1">
    <location>
        <position position="22"/>
    </location>
</feature>
<feature type="lipid moiety-binding region" description="S-diacylglycerol cysteine" evidence="1">
    <location>
        <position position="22"/>
    </location>
</feature>
<gene>
    <name evidence="1" type="primary">lolB</name>
    <name type="ordered locus">SDY_1258</name>
</gene>
<comment type="function">
    <text evidence="1">Plays a critical role in the incorporation of lipoproteins in the outer membrane after they are released by the LolA protein.</text>
</comment>
<comment type="subunit">
    <text evidence="1">Monomer.</text>
</comment>
<comment type="subcellular location">
    <subcellularLocation>
        <location evidence="1">Cell outer membrane</location>
        <topology evidence="1">Lipid-anchor</topology>
    </subcellularLocation>
</comment>
<comment type="similarity">
    <text evidence="1">Belongs to the LolB family.</text>
</comment>
<sequence length="207" mass="23597">MPLPDFRLIRLLPLAALVLTACSVTTPKGPGKSPDSPQWRQHQQDVRNLNQYQTRGAFAYISDQQKVYARFFWQQTGQDRYRLLLTNPLGSTELELNAQPGNVQLVDNKGQRYTADDAEEMIGKLTGMPIPLNSLRQWILGLPGDATDYKLDDQYRLSEITYSQNGKNWKVVYCGYDTKTQPAMPANMELTDGGQRIKLKMDNWIVK</sequence>
<reference key="1">
    <citation type="journal article" date="2005" name="Nucleic Acids Res.">
        <title>Genome dynamics and diversity of Shigella species, the etiologic agents of bacillary dysentery.</title>
        <authorList>
            <person name="Yang F."/>
            <person name="Yang J."/>
            <person name="Zhang X."/>
            <person name="Chen L."/>
            <person name="Jiang Y."/>
            <person name="Yan Y."/>
            <person name="Tang X."/>
            <person name="Wang J."/>
            <person name="Xiong Z."/>
            <person name="Dong J."/>
            <person name="Xue Y."/>
            <person name="Zhu Y."/>
            <person name="Xu X."/>
            <person name="Sun L."/>
            <person name="Chen S."/>
            <person name="Nie H."/>
            <person name="Peng J."/>
            <person name="Xu J."/>
            <person name="Wang Y."/>
            <person name="Yuan Z."/>
            <person name="Wen Y."/>
            <person name="Yao Z."/>
            <person name="Shen Y."/>
            <person name="Qiang B."/>
            <person name="Hou Y."/>
            <person name="Yu J."/>
            <person name="Jin Q."/>
        </authorList>
    </citation>
    <scope>NUCLEOTIDE SEQUENCE [LARGE SCALE GENOMIC DNA]</scope>
    <source>
        <strain>Sd197</strain>
    </source>
</reference>
<organism>
    <name type="scientific">Shigella dysenteriae serotype 1 (strain Sd197)</name>
    <dbReference type="NCBI Taxonomy" id="300267"/>
    <lineage>
        <taxon>Bacteria</taxon>
        <taxon>Pseudomonadati</taxon>
        <taxon>Pseudomonadota</taxon>
        <taxon>Gammaproteobacteria</taxon>
        <taxon>Enterobacterales</taxon>
        <taxon>Enterobacteriaceae</taxon>
        <taxon>Shigella</taxon>
    </lineage>
</organism>
<name>LOLB_SHIDS</name>
<dbReference type="EMBL" id="CP000034">
    <property type="protein sequence ID" value="ABB61407.1"/>
    <property type="molecule type" value="Genomic_DNA"/>
</dbReference>
<dbReference type="RefSeq" id="WP_001130688.1">
    <property type="nucleotide sequence ID" value="NC_007606.1"/>
</dbReference>
<dbReference type="RefSeq" id="YP_402898.1">
    <property type="nucleotide sequence ID" value="NC_007606.1"/>
</dbReference>
<dbReference type="SMR" id="Q32GZ8"/>
<dbReference type="STRING" id="300267.SDY_1258"/>
<dbReference type="EnsemblBacteria" id="ABB61407">
    <property type="protein sequence ID" value="ABB61407"/>
    <property type="gene ID" value="SDY_1258"/>
</dbReference>
<dbReference type="KEGG" id="sdy:SDY_1258"/>
<dbReference type="PATRIC" id="fig|300267.13.peg.1495"/>
<dbReference type="HOGENOM" id="CLU_092816_1_1_6"/>
<dbReference type="Proteomes" id="UP000002716">
    <property type="component" value="Chromosome"/>
</dbReference>
<dbReference type="GO" id="GO:0009279">
    <property type="term" value="C:cell outer membrane"/>
    <property type="evidence" value="ECO:0007669"/>
    <property type="project" value="UniProtKB-SubCell"/>
</dbReference>
<dbReference type="GO" id="GO:0044874">
    <property type="term" value="P:lipoprotein localization to outer membrane"/>
    <property type="evidence" value="ECO:0007669"/>
    <property type="project" value="UniProtKB-UniRule"/>
</dbReference>
<dbReference type="GO" id="GO:0015031">
    <property type="term" value="P:protein transport"/>
    <property type="evidence" value="ECO:0007669"/>
    <property type="project" value="UniProtKB-KW"/>
</dbReference>
<dbReference type="CDD" id="cd16326">
    <property type="entry name" value="LolB"/>
    <property type="match status" value="1"/>
</dbReference>
<dbReference type="FunFam" id="2.50.20.10:FF:000002">
    <property type="entry name" value="Outer-membrane lipoprotein LolB"/>
    <property type="match status" value="1"/>
</dbReference>
<dbReference type="Gene3D" id="2.50.20.10">
    <property type="entry name" value="Lipoprotein localisation LolA/LolB/LppX"/>
    <property type="match status" value="1"/>
</dbReference>
<dbReference type="HAMAP" id="MF_00233">
    <property type="entry name" value="LolB"/>
    <property type="match status" value="1"/>
</dbReference>
<dbReference type="InterPro" id="IPR029046">
    <property type="entry name" value="LolA/LolB/LppX"/>
</dbReference>
<dbReference type="InterPro" id="IPR004565">
    <property type="entry name" value="OM_lipoprot_LolB"/>
</dbReference>
<dbReference type="NCBIfam" id="TIGR00548">
    <property type="entry name" value="lolB"/>
    <property type="match status" value="1"/>
</dbReference>
<dbReference type="Pfam" id="PF03550">
    <property type="entry name" value="LolB"/>
    <property type="match status" value="1"/>
</dbReference>
<dbReference type="SUPFAM" id="SSF89392">
    <property type="entry name" value="Prokaryotic lipoproteins and lipoprotein localization factors"/>
    <property type="match status" value="1"/>
</dbReference>
<dbReference type="PROSITE" id="PS51257">
    <property type="entry name" value="PROKAR_LIPOPROTEIN"/>
    <property type="match status" value="1"/>
</dbReference>
<protein>
    <recommendedName>
        <fullName evidence="1">Outer-membrane lipoprotein LolB</fullName>
    </recommendedName>
</protein>